<reference key="1">
    <citation type="journal article" date="1997" name="Nature">
        <title>The complete genome sequence of the hyperthermophilic, sulphate-reducing archaeon Archaeoglobus fulgidus.</title>
        <authorList>
            <person name="Klenk H.-P."/>
            <person name="Clayton R.A."/>
            <person name="Tomb J.-F."/>
            <person name="White O."/>
            <person name="Nelson K.E."/>
            <person name="Ketchum K.A."/>
            <person name="Dodson R.J."/>
            <person name="Gwinn M.L."/>
            <person name="Hickey E.K."/>
            <person name="Peterson J.D."/>
            <person name="Richardson D.L."/>
            <person name="Kerlavage A.R."/>
            <person name="Graham D.E."/>
            <person name="Kyrpides N.C."/>
            <person name="Fleischmann R.D."/>
            <person name="Quackenbush J."/>
            <person name="Lee N.H."/>
            <person name="Sutton G.G."/>
            <person name="Gill S.R."/>
            <person name="Kirkness E.F."/>
            <person name="Dougherty B.A."/>
            <person name="McKenney K."/>
            <person name="Adams M.D."/>
            <person name="Loftus B.J."/>
            <person name="Peterson S.N."/>
            <person name="Reich C.I."/>
            <person name="McNeil L.K."/>
            <person name="Badger J.H."/>
            <person name="Glodek A."/>
            <person name="Zhou L."/>
            <person name="Overbeek R."/>
            <person name="Gocayne J.D."/>
            <person name="Weidman J.F."/>
            <person name="McDonald L.A."/>
            <person name="Utterback T.R."/>
            <person name="Cotton M.D."/>
            <person name="Spriggs T."/>
            <person name="Artiach P."/>
            <person name="Kaine B.P."/>
            <person name="Sykes S.M."/>
            <person name="Sadow P.W."/>
            <person name="D'Andrea K.P."/>
            <person name="Bowman C."/>
            <person name="Fujii C."/>
            <person name="Garland S.A."/>
            <person name="Mason T.M."/>
            <person name="Olsen G.J."/>
            <person name="Fraser C.M."/>
            <person name="Smith H.O."/>
            <person name="Woese C.R."/>
            <person name="Venter J.C."/>
        </authorList>
    </citation>
    <scope>NUCLEOTIDE SEQUENCE [LARGE SCALE GENOMIC DNA]</scope>
    <source>
        <strain>ATCC 49558 / DSM 4304 / JCM 9628 / NBRC 100126 / VC-16</strain>
    </source>
</reference>
<feature type="chain" id="PRO_0000128570" description="Large ribosomal subunit protein uL14">
    <location>
        <begin position="1"/>
        <end position="132"/>
    </location>
</feature>
<proteinExistence type="inferred from homology"/>
<keyword id="KW-1185">Reference proteome</keyword>
<keyword id="KW-0687">Ribonucleoprotein</keyword>
<keyword id="KW-0689">Ribosomal protein</keyword>
<keyword id="KW-0694">RNA-binding</keyword>
<keyword id="KW-0699">rRNA-binding</keyword>
<name>RL14_ARCFU</name>
<gene>
    <name evidence="1" type="primary">rpl14</name>
    <name type="ordered locus">AF_1915</name>
</gene>
<evidence type="ECO:0000255" key="1">
    <source>
        <dbReference type="HAMAP-Rule" id="MF_01367"/>
    </source>
</evidence>
<evidence type="ECO:0000305" key="2"/>
<organism>
    <name type="scientific">Archaeoglobus fulgidus (strain ATCC 49558 / DSM 4304 / JCM 9628 / NBRC 100126 / VC-16)</name>
    <dbReference type="NCBI Taxonomy" id="224325"/>
    <lineage>
        <taxon>Archaea</taxon>
        <taxon>Methanobacteriati</taxon>
        <taxon>Methanobacteriota</taxon>
        <taxon>Archaeoglobi</taxon>
        <taxon>Archaeoglobales</taxon>
        <taxon>Archaeoglobaceae</taxon>
        <taxon>Archaeoglobus</taxon>
    </lineage>
</organism>
<sequence>MKAIRANIPRALPTGARLVCADNTGARELEIIAVKGYKGVRRRYPAAGVGDIVVVTVKKGTPEIRKQVHYAVIVRQRKEYRRPDGTRVKFEDNAAVITNERGEPRGSEIRGAVAREAAERFSKIGTIASVIV</sequence>
<comment type="function">
    <text evidence="1">Binds to 23S rRNA. Forms part of two intersubunit bridges in the 70S ribosome.</text>
</comment>
<comment type="subunit">
    <text evidence="1">Part of the 50S ribosomal subunit. Forms a cluster with proteins L3 and L24e, part of which may contact the 16S rRNA in 2 intersubunit bridges.</text>
</comment>
<comment type="similarity">
    <text evidence="1">Belongs to the universal ribosomal protein uL14 family.</text>
</comment>
<accession>O28364</accession>
<protein>
    <recommendedName>
        <fullName evidence="1">Large ribosomal subunit protein uL14</fullName>
    </recommendedName>
    <alternativeName>
        <fullName evidence="2">50S ribosomal protein L14</fullName>
    </alternativeName>
</protein>
<dbReference type="EMBL" id="AE000782">
    <property type="protein sequence ID" value="AAB89338.1"/>
    <property type="molecule type" value="Genomic_DNA"/>
</dbReference>
<dbReference type="PIR" id="B69489">
    <property type="entry name" value="B69489"/>
</dbReference>
<dbReference type="SMR" id="O28364"/>
<dbReference type="STRING" id="224325.AF_1915"/>
<dbReference type="PaxDb" id="224325-AF_1915"/>
<dbReference type="EnsemblBacteria" id="AAB89338">
    <property type="protein sequence ID" value="AAB89338"/>
    <property type="gene ID" value="AF_1915"/>
</dbReference>
<dbReference type="KEGG" id="afu:AF_1915"/>
<dbReference type="eggNOG" id="arCOG04095">
    <property type="taxonomic scope" value="Archaea"/>
</dbReference>
<dbReference type="HOGENOM" id="CLU_095071_3_0_2"/>
<dbReference type="OrthoDB" id="23569at2157"/>
<dbReference type="PhylomeDB" id="O28364"/>
<dbReference type="Proteomes" id="UP000002199">
    <property type="component" value="Chromosome"/>
</dbReference>
<dbReference type="GO" id="GO:0022625">
    <property type="term" value="C:cytosolic large ribosomal subunit"/>
    <property type="evidence" value="ECO:0007669"/>
    <property type="project" value="TreeGrafter"/>
</dbReference>
<dbReference type="GO" id="GO:0070180">
    <property type="term" value="F:large ribosomal subunit rRNA binding"/>
    <property type="evidence" value="ECO:0007669"/>
    <property type="project" value="TreeGrafter"/>
</dbReference>
<dbReference type="GO" id="GO:0003735">
    <property type="term" value="F:structural constituent of ribosome"/>
    <property type="evidence" value="ECO:0007669"/>
    <property type="project" value="InterPro"/>
</dbReference>
<dbReference type="GO" id="GO:0006412">
    <property type="term" value="P:translation"/>
    <property type="evidence" value="ECO:0007669"/>
    <property type="project" value="UniProtKB-UniRule"/>
</dbReference>
<dbReference type="CDD" id="cd00337">
    <property type="entry name" value="Ribosomal_uL14"/>
    <property type="match status" value="1"/>
</dbReference>
<dbReference type="FunFam" id="2.40.150.20:FF:000007">
    <property type="entry name" value="50S ribosomal protein L14"/>
    <property type="match status" value="1"/>
</dbReference>
<dbReference type="Gene3D" id="2.40.150.20">
    <property type="entry name" value="Ribosomal protein L14"/>
    <property type="match status" value="1"/>
</dbReference>
<dbReference type="HAMAP" id="MF_01367">
    <property type="entry name" value="Ribosomal_uL14"/>
    <property type="match status" value="1"/>
</dbReference>
<dbReference type="InterPro" id="IPR000218">
    <property type="entry name" value="Ribosomal_uL14"/>
</dbReference>
<dbReference type="InterPro" id="IPR019971">
    <property type="entry name" value="Ribosomal_uL14_arc"/>
</dbReference>
<dbReference type="InterPro" id="IPR019972">
    <property type="entry name" value="Ribosomal_uL14_CS"/>
</dbReference>
<dbReference type="InterPro" id="IPR036853">
    <property type="entry name" value="Ribosomal_uL14_sf"/>
</dbReference>
<dbReference type="NCBIfam" id="NF006344">
    <property type="entry name" value="PRK08571.1"/>
    <property type="match status" value="1"/>
</dbReference>
<dbReference type="NCBIfam" id="TIGR03673">
    <property type="entry name" value="uL14_arch"/>
    <property type="match status" value="1"/>
</dbReference>
<dbReference type="PANTHER" id="PTHR11761">
    <property type="entry name" value="50S/60S RIBOSOMAL PROTEIN L14/L23"/>
    <property type="match status" value="1"/>
</dbReference>
<dbReference type="PANTHER" id="PTHR11761:SF8">
    <property type="entry name" value="LARGE RIBOSOMAL SUBUNIT PROTEIN UL14"/>
    <property type="match status" value="1"/>
</dbReference>
<dbReference type="Pfam" id="PF00238">
    <property type="entry name" value="Ribosomal_L14"/>
    <property type="match status" value="1"/>
</dbReference>
<dbReference type="SMART" id="SM01374">
    <property type="entry name" value="Ribosomal_L14"/>
    <property type="match status" value="1"/>
</dbReference>
<dbReference type="SUPFAM" id="SSF50193">
    <property type="entry name" value="Ribosomal protein L14"/>
    <property type="match status" value="1"/>
</dbReference>
<dbReference type="PROSITE" id="PS00049">
    <property type="entry name" value="RIBOSOMAL_L14"/>
    <property type="match status" value="1"/>
</dbReference>